<dbReference type="EMBL" id="AP008230">
    <property type="protein sequence ID" value="BAE84310.1"/>
    <property type="molecule type" value="Genomic_DNA"/>
</dbReference>
<dbReference type="RefSeq" id="WP_011460396.1">
    <property type="nucleotide sequence ID" value="NC_007907.1"/>
</dbReference>
<dbReference type="SMR" id="Q24UI2"/>
<dbReference type="STRING" id="138119.DSY2521"/>
<dbReference type="KEGG" id="dsy:DSY2521"/>
<dbReference type="eggNOG" id="COG0779">
    <property type="taxonomic scope" value="Bacteria"/>
</dbReference>
<dbReference type="HOGENOM" id="CLU_070525_2_2_9"/>
<dbReference type="Proteomes" id="UP000001946">
    <property type="component" value="Chromosome"/>
</dbReference>
<dbReference type="GO" id="GO:0005829">
    <property type="term" value="C:cytosol"/>
    <property type="evidence" value="ECO:0007669"/>
    <property type="project" value="TreeGrafter"/>
</dbReference>
<dbReference type="GO" id="GO:0000028">
    <property type="term" value="P:ribosomal small subunit assembly"/>
    <property type="evidence" value="ECO:0007669"/>
    <property type="project" value="TreeGrafter"/>
</dbReference>
<dbReference type="GO" id="GO:0006412">
    <property type="term" value="P:translation"/>
    <property type="evidence" value="ECO:0007669"/>
    <property type="project" value="TreeGrafter"/>
</dbReference>
<dbReference type="CDD" id="cd01734">
    <property type="entry name" value="YlxS_C"/>
    <property type="match status" value="1"/>
</dbReference>
<dbReference type="FunFam" id="3.30.300.70:FF:000001">
    <property type="entry name" value="Ribosome maturation factor RimP"/>
    <property type="match status" value="1"/>
</dbReference>
<dbReference type="Gene3D" id="2.30.30.180">
    <property type="entry name" value="Ribosome maturation factor RimP, C-terminal domain"/>
    <property type="match status" value="1"/>
</dbReference>
<dbReference type="Gene3D" id="3.30.300.70">
    <property type="entry name" value="RimP-like superfamily, N-terminal"/>
    <property type="match status" value="1"/>
</dbReference>
<dbReference type="HAMAP" id="MF_01077">
    <property type="entry name" value="RimP"/>
    <property type="match status" value="1"/>
</dbReference>
<dbReference type="InterPro" id="IPR003728">
    <property type="entry name" value="Ribosome_maturation_RimP"/>
</dbReference>
<dbReference type="InterPro" id="IPR028998">
    <property type="entry name" value="RimP_C"/>
</dbReference>
<dbReference type="InterPro" id="IPR036847">
    <property type="entry name" value="RimP_C_sf"/>
</dbReference>
<dbReference type="InterPro" id="IPR028989">
    <property type="entry name" value="RimP_N"/>
</dbReference>
<dbReference type="InterPro" id="IPR035956">
    <property type="entry name" value="RimP_N_sf"/>
</dbReference>
<dbReference type="NCBIfam" id="NF000928">
    <property type="entry name" value="PRK00092.1-2"/>
    <property type="match status" value="1"/>
</dbReference>
<dbReference type="PANTHER" id="PTHR33867">
    <property type="entry name" value="RIBOSOME MATURATION FACTOR RIMP"/>
    <property type="match status" value="1"/>
</dbReference>
<dbReference type="PANTHER" id="PTHR33867:SF1">
    <property type="entry name" value="RIBOSOME MATURATION FACTOR RIMP"/>
    <property type="match status" value="1"/>
</dbReference>
<dbReference type="Pfam" id="PF17384">
    <property type="entry name" value="DUF150_C"/>
    <property type="match status" value="1"/>
</dbReference>
<dbReference type="Pfam" id="PF02576">
    <property type="entry name" value="RimP_N"/>
    <property type="match status" value="1"/>
</dbReference>
<dbReference type="SUPFAM" id="SSF74942">
    <property type="entry name" value="YhbC-like, C-terminal domain"/>
    <property type="match status" value="1"/>
</dbReference>
<dbReference type="SUPFAM" id="SSF75420">
    <property type="entry name" value="YhbC-like, N-terminal domain"/>
    <property type="match status" value="1"/>
</dbReference>
<protein>
    <recommendedName>
        <fullName evidence="1">Ribosome maturation factor RimP</fullName>
    </recommendedName>
</protein>
<comment type="function">
    <text evidence="1">Required for maturation of 30S ribosomal subunits.</text>
</comment>
<comment type="subcellular location">
    <subcellularLocation>
        <location evidence="1">Cytoplasm</location>
    </subcellularLocation>
</comment>
<comment type="similarity">
    <text evidence="1">Belongs to the RimP family.</text>
</comment>
<reference key="1">
    <citation type="journal article" date="2006" name="J. Bacteriol.">
        <title>Complete genome sequence of the dehalorespiring bacterium Desulfitobacterium hafniense Y51 and comparison with Dehalococcoides ethenogenes 195.</title>
        <authorList>
            <person name="Nonaka H."/>
            <person name="Keresztes G."/>
            <person name="Shinoda Y."/>
            <person name="Ikenaga Y."/>
            <person name="Abe M."/>
            <person name="Naito K."/>
            <person name="Inatomi K."/>
            <person name="Furukawa K."/>
            <person name="Inui M."/>
            <person name="Yukawa H."/>
        </authorList>
    </citation>
    <scope>NUCLEOTIDE SEQUENCE [LARGE SCALE GENOMIC DNA]</scope>
    <source>
        <strain>Y51</strain>
    </source>
</reference>
<organism>
    <name type="scientific">Desulfitobacterium hafniense (strain Y51)</name>
    <dbReference type="NCBI Taxonomy" id="138119"/>
    <lineage>
        <taxon>Bacteria</taxon>
        <taxon>Bacillati</taxon>
        <taxon>Bacillota</taxon>
        <taxon>Clostridia</taxon>
        <taxon>Eubacteriales</taxon>
        <taxon>Desulfitobacteriaceae</taxon>
        <taxon>Desulfitobacterium</taxon>
    </lineage>
</organism>
<evidence type="ECO:0000255" key="1">
    <source>
        <dbReference type="HAMAP-Rule" id="MF_01077"/>
    </source>
</evidence>
<keyword id="KW-0963">Cytoplasm</keyword>
<keyword id="KW-1185">Reference proteome</keyword>
<keyword id="KW-0690">Ribosome biogenesis</keyword>
<accession>Q24UI2</accession>
<feature type="chain" id="PRO_1000073019" description="Ribosome maturation factor RimP">
    <location>
        <begin position="1"/>
        <end position="152"/>
    </location>
</feature>
<name>RIMP_DESHY</name>
<sequence length="152" mass="17347">MGESIMEQVEAIIAPVITEQGLELVDVEYVKEGAHWYLRIYIDKEGGVDIDDCTNVSHLVSEVLDKHDPIAQAYMLEVSSPGLERPLKKDEDFERFTGKLVRVLTKEAYQGYKEFTGYLVGLIEDDIVLEYEKEKMAIPRAIVDKANLTFEF</sequence>
<gene>
    <name evidence="1" type="primary">rimP</name>
    <name type="ordered locus">DSY2521</name>
</gene>
<proteinExistence type="inferred from homology"/>